<organism>
    <name type="scientific">Nocardia farcinica (strain IFM 10152)</name>
    <dbReference type="NCBI Taxonomy" id="247156"/>
    <lineage>
        <taxon>Bacteria</taxon>
        <taxon>Bacillati</taxon>
        <taxon>Actinomycetota</taxon>
        <taxon>Actinomycetes</taxon>
        <taxon>Mycobacteriales</taxon>
        <taxon>Nocardiaceae</taxon>
        <taxon>Nocardia</taxon>
    </lineage>
</organism>
<gene>
    <name evidence="1" type="primary">coaD</name>
    <name type="ordered locus">NFA_41890</name>
</gene>
<feature type="chain" id="PRO_0000156246" description="Phosphopantetheine adenylyltransferase">
    <location>
        <begin position="1"/>
        <end position="161"/>
    </location>
</feature>
<feature type="binding site" evidence="1">
    <location>
        <begin position="9"/>
        <end position="10"/>
    </location>
    <ligand>
        <name>ATP</name>
        <dbReference type="ChEBI" id="CHEBI:30616"/>
    </ligand>
</feature>
<feature type="binding site" evidence="1">
    <location>
        <position position="9"/>
    </location>
    <ligand>
        <name>substrate</name>
    </ligand>
</feature>
<feature type="binding site" evidence="1">
    <location>
        <position position="17"/>
    </location>
    <ligand>
        <name>ATP</name>
        <dbReference type="ChEBI" id="CHEBI:30616"/>
    </ligand>
</feature>
<feature type="binding site" evidence="1">
    <location>
        <position position="41"/>
    </location>
    <ligand>
        <name>substrate</name>
    </ligand>
</feature>
<feature type="binding site" evidence="1">
    <location>
        <position position="73"/>
    </location>
    <ligand>
        <name>substrate</name>
    </ligand>
</feature>
<feature type="binding site" evidence="1">
    <location>
        <position position="87"/>
    </location>
    <ligand>
        <name>substrate</name>
    </ligand>
</feature>
<feature type="binding site" evidence="1">
    <location>
        <begin position="88"/>
        <end position="90"/>
    </location>
    <ligand>
        <name>ATP</name>
        <dbReference type="ChEBI" id="CHEBI:30616"/>
    </ligand>
</feature>
<feature type="binding site" evidence="1">
    <location>
        <position position="98"/>
    </location>
    <ligand>
        <name>ATP</name>
        <dbReference type="ChEBI" id="CHEBI:30616"/>
    </ligand>
</feature>
<feature type="binding site" evidence="1">
    <location>
        <begin position="122"/>
        <end position="128"/>
    </location>
    <ligand>
        <name>ATP</name>
        <dbReference type="ChEBI" id="CHEBI:30616"/>
    </ligand>
</feature>
<feature type="site" description="Transition state stabilizer" evidence="1">
    <location>
        <position position="17"/>
    </location>
</feature>
<dbReference type="EC" id="2.7.7.3" evidence="1"/>
<dbReference type="EMBL" id="AP006618">
    <property type="protein sequence ID" value="BAD59038.1"/>
    <property type="molecule type" value="Genomic_DNA"/>
</dbReference>
<dbReference type="RefSeq" id="WP_011210723.1">
    <property type="nucleotide sequence ID" value="NC_006361.1"/>
</dbReference>
<dbReference type="SMR" id="Q5YS03"/>
<dbReference type="STRING" id="247156.NFA_41890"/>
<dbReference type="GeneID" id="61134824"/>
<dbReference type="KEGG" id="nfa:NFA_41890"/>
<dbReference type="eggNOG" id="COG0669">
    <property type="taxonomic scope" value="Bacteria"/>
</dbReference>
<dbReference type="HOGENOM" id="CLU_100149_1_0_11"/>
<dbReference type="OrthoDB" id="9806661at2"/>
<dbReference type="UniPathway" id="UPA00241">
    <property type="reaction ID" value="UER00355"/>
</dbReference>
<dbReference type="Proteomes" id="UP000006820">
    <property type="component" value="Chromosome"/>
</dbReference>
<dbReference type="GO" id="GO:0005737">
    <property type="term" value="C:cytoplasm"/>
    <property type="evidence" value="ECO:0007669"/>
    <property type="project" value="UniProtKB-SubCell"/>
</dbReference>
<dbReference type="GO" id="GO:0005524">
    <property type="term" value="F:ATP binding"/>
    <property type="evidence" value="ECO:0007669"/>
    <property type="project" value="UniProtKB-KW"/>
</dbReference>
<dbReference type="GO" id="GO:0004595">
    <property type="term" value="F:pantetheine-phosphate adenylyltransferase activity"/>
    <property type="evidence" value="ECO:0007669"/>
    <property type="project" value="UniProtKB-UniRule"/>
</dbReference>
<dbReference type="GO" id="GO:0015937">
    <property type="term" value="P:coenzyme A biosynthetic process"/>
    <property type="evidence" value="ECO:0007669"/>
    <property type="project" value="UniProtKB-UniRule"/>
</dbReference>
<dbReference type="CDD" id="cd02163">
    <property type="entry name" value="PPAT"/>
    <property type="match status" value="1"/>
</dbReference>
<dbReference type="FunFam" id="3.40.50.620:FF:000012">
    <property type="entry name" value="Phosphopantetheine adenylyltransferase"/>
    <property type="match status" value="1"/>
</dbReference>
<dbReference type="Gene3D" id="3.40.50.620">
    <property type="entry name" value="HUPs"/>
    <property type="match status" value="1"/>
</dbReference>
<dbReference type="HAMAP" id="MF_00151">
    <property type="entry name" value="PPAT_bact"/>
    <property type="match status" value="1"/>
</dbReference>
<dbReference type="InterPro" id="IPR004821">
    <property type="entry name" value="Cyt_trans-like"/>
</dbReference>
<dbReference type="InterPro" id="IPR001980">
    <property type="entry name" value="PPAT"/>
</dbReference>
<dbReference type="InterPro" id="IPR014729">
    <property type="entry name" value="Rossmann-like_a/b/a_fold"/>
</dbReference>
<dbReference type="NCBIfam" id="TIGR01510">
    <property type="entry name" value="coaD_prev_kdtB"/>
    <property type="match status" value="1"/>
</dbReference>
<dbReference type="NCBIfam" id="TIGR00125">
    <property type="entry name" value="cyt_tran_rel"/>
    <property type="match status" value="1"/>
</dbReference>
<dbReference type="PANTHER" id="PTHR21342">
    <property type="entry name" value="PHOSPHOPANTETHEINE ADENYLYLTRANSFERASE"/>
    <property type="match status" value="1"/>
</dbReference>
<dbReference type="PANTHER" id="PTHR21342:SF1">
    <property type="entry name" value="PHOSPHOPANTETHEINE ADENYLYLTRANSFERASE"/>
    <property type="match status" value="1"/>
</dbReference>
<dbReference type="Pfam" id="PF01467">
    <property type="entry name" value="CTP_transf_like"/>
    <property type="match status" value="1"/>
</dbReference>
<dbReference type="PRINTS" id="PR01020">
    <property type="entry name" value="LPSBIOSNTHSS"/>
</dbReference>
<dbReference type="SUPFAM" id="SSF52374">
    <property type="entry name" value="Nucleotidylyl transferase"/>
    <property type="match status" value="1"/>
</dbReference>
<protein>
    <recommendedName>
        <fullName evidence="1">Phosphopantetheine adenylyltransferase</fullName>
        <ecNumber evidence="1">2.7.7.3</ecNumber>
    </recommendedName>
    <alternativeName>
        <fullName evidence="1">Dephospho-CoA pyrophosphorylase</fullName>
    </alternativeName>
    <alternativeName>
        <fullName evidence="1">Pantetheine-phosphate adenylyltransferase</fullName>
        <shortName evidence="1">PPAT</shortName>
    </alternativeName>
</protein>
<evidence type="ECO:0000255" key="1">
    <source>
        <dbReference type="HAMAP-Rule" id="MF_00151"/>
    </source>
</evidence>
<accession>Q5YS03</accession>
<sequence length="161" mass="17762">MAGALCPGSFDPVTNGHLDVFTRAAAQFDEVVVTVMINPNKKGMFDVEERMELLRETTAHLPNVRVASWRGLLVDFAREQGITAIVKGLRDATDFGYELQMAQMNKKLSGVDTFFIATNPAFSFLSSSLVKEVATYGGDVSDMLPPVVHKRLLDRIAERRG</sequence>
<keyword id="KW-0067">ATP-binding</keyword>
<keyword id="KW-0173">Coenzyme A biosynthesis</keyword>
<keyword id="KW-0963">Cytoplasm</keyword>
<keyword id="KW-0460">Magnesium</keyword>
<keyword id="KW-0547">Nucleotide-binding</keyword>
<keyword id="KW-0548">Nucleotidyltransferase</keyword>
<keyword id="KW-1185">Reference proteome</keyword>
<keyword id="KW-0808">Transferase</keyword>
<reference key="1">
    <citation type="journal article" date="2004" name="Proc. Natl. Acad. Sci. U.S.A.">
        <title>The complete genomic sequence of Nocardia farcinica IFM 10152.</title>
        <authorList>
            <person name="Ishikawa J."/>
            <person name="Yamashita A."/>
            <person name="Mikami Y."/>
            <person name="Hoshino Y."/>
            <person name="Kurita H."/>
            <person name="Hotta K."/>
            <person name="Shiba T."/>
            <person name="Hattori M."/>
        </authorList>
    </citation>
    <scope>NUCLEOTIDE SEQUENCE [LARGE SCALE GENOMIC DNA]</scope>
    <source>
        <strain>IFM 10152</strain>
    </source>
</reference>
<comment type="function">
    <text evidence="1">Reversibly transfers an adenylyl group from ATP to 4'-phosphopantetheine, yielding dephospho-CoA (dPCoA) and pyrophosphate.</text>
</comment>
<comment type="catalytic activity">
    <reaction evidence="1">
        <text>(R)-4'-phosphopantetheine + ATP + H(+) = 3'-dephospho-CoA + diphosphate</text>
        <dbReference type="Rhea" id="RHEA:19801"/>
        <dbReference type="ChEBI" id="CHEBI:15378"/>
        <dbReference type="ChEBI" id="CHEBI:30616"/>
        <dbReference type="ChEBI" id="CHEBI:33019"/>
        <dbReference type="ChEBI" id="CHEBI:57328"/>
        <dbReference type="ChEBI" id="CHEBI:61723"/>
        <dbReference type="EC" id="2.7.7.3"/>
    </reaction>
</comment>
<comment type="cofactor">
    <cofactor evidence="1">
        <name>Mg(2+)</name>
        <dbReference type="ChEBI" id="CHEBI:18420"/>
    </cofactor>
</comment>
<comment type="pathway">
    <text evidence="1">Cofactor biosynthesis; coenzyme A biosynthesis; CoA from (R)-pantothenate: step 4/5.</text>
</comment>
<comment type="subunit">
    <text evidence="1">Homohexamer.</text>
</comment>
<comment type="subcellular location">
    <subcellularLocation>
        <location evidence="1">Cytoplasm</location>
    </subcellularLocation>
</comment>
<comment type="similarity">
    <text evidence="1">Belongs to the bacterial CoaD family.</text>
</comment>
<proteinExistence type="inferred from homology"/>
<name>COAD_NOCFA</name>